<accession>Q7YQK3</accession>
<sequence>MSQDTEVDMKEVELNELEPEKQPMNAASEAAVAMAVAGGAEKNGLVKIKVAEDEAEAAAKFTGLSKEELLKVAGSPGWVRTRWALLLLFWLGWIGMLAGAVVIIVRAPRCRELPVQRWWHKGALYRVGDLQAFQARDSGDLAGLKGHLDYLSTLKVKGLVLGPIHKNQEDDVAGTNLQEINPAVGSKEEFDSFLQSAKKKSIRVILDLTPNYLGQNSWFLPTQVDLVATKVKDALNFWLQAGVDGFQVRDVGNLTNAALHLAEWRNITKSFSEDRLLIAGTESSDLHQILSLLESTKDLLLTSSYLSASGVSGENMKFLVTQYLNATDSHWCSWSLSQAGLLTSFVPAQLLRLYQLLLFTLPGTPVFSYGDEIGLQAAALPGEPAKAPVMLWDESSLPSASVSANMTVKGQDEDSGSLLSLFRRLSDQRGKERSLLHGDFHALSTGSNLFSYVRHWDQNERFLVVLNFGDESLSARLGASSLPAGASLPARADLLLSTHPGREEGTSLALEHLNLEPHEGLLLHFPYVA</sequence>
<gene>
    <name evidence="1" type="primary">SLC3A2</name>
</gene>
<evidence type="ECO:0000250" key="1">
    <source>
        <dbReference type="UniProtKB" id="P08195"/>
    </source>
</evidence>
<evidence type="ECO:0000250" key="2">
    <source>
        <dbReference type="UniProtKB" id="P10852"/>
    </source>
</evidence>
<evidence type="ECO:0000250" key="3">
    <source>
        <dbReference type="UniProtKB" id="P63115"/>
    </source>
</evidence>
<evidence type="ECO:0000250" key="4">
    <source>
        <dbReference type="UniProtKB" id="Q794F9"/>
    </source>
</evidence>
<evidence type="ECO:0000255" key="5"/>
<evidence type="ECO:0000256" key="6">
    <source>
        <dbReference type="SAM" id="MobiDB-lite"/>
    </source>
</evidence>
<evidence type="ECO:0000269" key="7">
    <source>
    </source>
</evidence>
<evidence type="ECO:0000269" key="8">
    <source>
    </source>
</evidence>
<evidence type="ECO:0000303" key="9">
    <source>
    </source>
</evidence>
<evidence type="ECO:0000305" key="10"/>
<evidence type="ECO:0000312" key="11">
    <source>
        <dbReference type="EMBL" id="AAP47190.1"/>
    </source>
</evidence>
<comment type="function">
    <text evidence="1 3 7 8">Acts as a chaperone that facilitates biogenesis and trafficking of functional transporters heterodimers to the plasma membrane. Forms heterodimer with SLC7 family transporters (SLC7A5, SLC7A6, SLC7A7, SLC7A8, SLC7A10 and SLC7A11), a group of amino-acid antiporters. Heterodimers function as amino acids exchangers, the specificity of the substrate depending on the SLC7A subunit. Heterodimers formed by SLC3A2/SLC7A6 or SLC3A2/SLC7A7 mediate the uptake of dibasic amino acids. Heterodimer SLC3A2/SLC7A11 functions as an antiporter by mediating the exchange of extracellular anionic L-cystine and intracellular L-glutamate across the cellular plasma membrane (By similarity). SLC3A2/SLC7A10 translocates small neutral L- and D-amino acids across the plasma membrane (By similarity). SLC3A2/SLC75 or SLC3A2/SLC7A8 translocates neutral amino acids with broad specificity, thyroid hormones and L-DOPA (PubMed:12614332, PubMed:16125134). SLC3A2 is essential for plasma membrane localization, stability, and the transport activity of SLC7A5 and SLC7A8. When associated with LAPTM4B, the heterodimer SLC7A5 is recruited to lysosomes to promote leucine uptake into these organelles, and thereby mediates mTORC1 activation. Modulates integrin-related signaling and is essential for integrin-dependent cell spreading, migration and tumor progression (By similarity).</text>
</comment>
<comment type="subunit">
    <text evidence="1 7 8">Disulfide-linked heterodimer with a non-glycosylated light chain (SLC7A5, SLC7A6, SLC7A7, SLC7A8, SLC7A10 or SLC7A11) (PubMed:12614332, PubMed:16125134). Interacts with TLCD3A/CT120 and ICAM1. Constitutively and specifically associates with beta-1 integrins (alpha-2/beta-1, alpha-3/beta-1, alpha-5/beta-1 and alpha-6/beta-1), but minimally with alpha-4/beta-1. Interacts with LAPTM4B; recruits SLC3A2 and SLC7A5 to lysosomes to promote leucine uptake into these organelles and is required for mTORC1 activation (By similarity).</text>
</comment>
<comment type="subcellular location">
    <subcellularLocation>
        <location evidence="1">Apical cell membrane</location>
    </subcellularLocation>
    <subcellularLocation>
        <location evidence="8">Cell membrane</location>
        <topology evidence="1">Single-pass type II membrane protein</topology>
    </subcellularLocation>
    <subcellularLocation>
        <location evidence="2">Cell junction</location>
    </subcellularLocation>
    <subcellularLocation>
        <location evidence="1">Lysosome membrane</location>
    </subcellularLocation>
    <subcellularLocation>
        <location evidence="1">Melanosome</location>
    </subcellularLocation>
    <subcellularLocation>
        <location evidence="2">Basolateral cell membrane</location>
    </subcellularLocation>
    <text evidence="1 2 4">Localized at the plasma membrane when associated with SLC7A5 or SLC7A8. Localized to the apical membrane of placental syncytiotrophoblastic cells. Recruited to lysosomes by LAPTM4B (By similarity). Located selectively at cell-cell adhesion sites (By similarity). Colocalized with SLC7A8/LAT2 at the basolateral membrane of kidney proximal tubules and small intestine epithelia. Expressed in both luminal and abluminal membranes of brain capillary endothelial cells (By similarity).</text>
</comment>
<comment type="PTM">
    <text evidence="1">Phosphorylation on Ser-307 or Ser-309 and on Ser-426 by ecto-protein kinases favors heterotypic cell-cell interactions.</text>
</comment>
<comment type="PTM">
    <text evidence="1">N-glycosylated; N-glycosylation is crucial for trafficking and stability of SLC3A2 to the plasma membrane.</text>
</comment>
<comment type="similarity">
    <text evidence="5">Belongs to the SLC3A transporter family.</text>
</comment>
<comment type="sequence caution" evidence="10">
    <conflict type="erroneous initiation">
        <sequence resource="EMBL-CDS" id="AAP47190"/>
    </conflict>
    <text>Extended N-terminus.</text>
</comment>
<feature type="chain" id="PRO_0000252235" description="Amino acid transporter heavy chain SLC3A2">
    <location>
        <begin position="1"/>
        <end position="529"/>
    </location>
</feature>
<feature type="topological domain" description="Cytoplasmic" evidence="1">
    <location>
        <begin position="1"/>
        <end position="84"/>
    </location>
</feature>
<feature type="transmembrane region" description="Helical; Signal-anchor for type II membrane protein" evidence="5">
    <location>
        <begin position="85"/>
        <end position="105"/>
    </location>
</feature>
<feature type="topological domain" description="Extracellular" evidence="1">
    <location>
        <begin position="106"/>
        <end position="529"/>
    </location>
</feature>
<feature type="region of interest" description="Disordered" evidence="6">
    <location>
        <begin position="1"/>
        <end position="20"/>
    </location>
</feature>
<feature type="compositionally biased region" description="Basic and acidic residues" evidence="6">
    <location>
        <begin position="7"/>
        <end position="20"/>
    </location>
</feature>
<feature type="modified residue" description="Phosphoserine" evidence="1">
    <location>
        <position position="2"/>
    </location>
</feature>
<feature type="modified residue" description="Phosphothreonine" evidence="4">
    <location>
        <position position="5"/>
    </location>
</feature>
<feature type="modified residue" description="Phosphoserine" evidence="1">
    <location>
        <position position="65"/>
    </location>
</feature>
<feature type="modified residue" description="Phosphoserine" evidence="1">
    <location>
        <position position="307"/>
    </location>
</feature>
<feature type="modified residue" description="Phosphoserine" evidence="1">
    <location>
        <position position="309"/>
    </location>
</feature>
<feature type="modified residue" description="Phosphoserine" evidence="1">
    <location>
        <position position="426"/>
    </location>
</feature>
<feature type="glycosylation site" description="N-linked (GlcNAc...) asparagine" evidence="1">
    <location>
        <position position="266"/>
    </location>
</feature>
<feature type="glycosylation site" description="N-linked (GlcNAc...) asparagine" evidence="1">
    <location>
        <position position="325"/>
    </location>
</feature>
<feature type="glycosylation site" description="N-linked (GlcNAc...) asparagine" evidence="1">
    <location>
        <position position="405"/>
    </location>
</feature>
<feature type="disulfide bond" description="Interchain (with C-164 in SLC7A5; C-158 in SLC7A11 and C-154 in SLC7A8)" evidence="1">
    <location>
        <position position="110"/>
    </location>
</feature>
<feature type="cross-link" description="Glycyl lysine isopeptide (Lys-Gly) (interchain with G-Cter in ubiquitin)" evidence="1">
    <location>
        <position position="49"/>
    </location>
</feature>
<feature type="cross-link" description="Glycyl lysine isopeptide (Lys-Gly) (interchain with G-Cter in SUMO2)" evidence="1">
    <location>
        <position position="66"/>
    </location>
</feature>
<feature type="mutagenesis site" description="No effect on phenylalanine transport." evidence="8">
    <original>C</original>
    <variation>S</variation>
    <location>
        <position position="110"/>
    </location>
</feature>
<feature type="mutagenesis site" description="No effect on phenylalanine transport." evidence="8">
    <original>C</original>
    <variation>S</variation>
    <location>
        <position position="332"/>
    </location>
</feature>
<reference evidence="10 11" key="1">
    <citation type="journal article" date="2003" name="J. Neurochem.">
        <title>Site-directed mutagenesis of rabbit LAT1 at amino acids 219 and 234.</title>
        <authorList>
            <person name="Boado R.J."/>
            <person name="Li J.Y."/>
            <person name="Pardridge W.M."/>
        </authorList>
    </citation>
    <scope>NUCLEOTIDE SEQUENCE [MRNA]</scope>
    <scope>FUNCTION</scope>
    <scope>SUBUNIT</scope>
    <scope>INTERACTION WITH SLC7A5</scope>
    <source>
        <tissue evidence="7">Brain capillary</tissue>
    </source>
</reference>
<reference evidence="10" key="2">
    <citation type="journal article" date="2005" name="Biochim. Biophys. Acta">
        <title>Site-directed mutagenesis of cysteine residues of large neutral amino acid transporter LAT1.</title>
        <authorList>
            <person name="Boado R.J."/>
            <person name="Li J.Y."/>
            <person name="Chu C."/>
            <person name="Ogoshi F."/>
            <person name="Wise P."/>
            <person name="Pardridge W.M."/>
        </authorList>
    </citation>
    <scope>FUNCTION</scope>
    <scope>SUBCELLULAR LOCATION</scope>
    <scope>INTERACTION WITH SLC7A5</scope>
    <scope>MUTAGENESIS OF CYS-110 AND CYS-332</scope>
</reference>
<keyword id="KW-0029">Amino-acid transport</keyword>
<keyword id="KW-0965">Cell junction</keyword>
<keyword id="KW-1003">Cell membrane</keyword>
<keyword id="KW-1015">Disulfide bond</keyword>
<keyword id="KW-0325">Glycoprotein</keyword>
<keyword id="KW-1017">Isopeptide bond</keyword>
<keyword id="KW-0458">Lysosome</keyword>
<keyword id="KW-0472">Membrane</keyword>
<keyword id="KW-0597">Phosphoprotein</keyword>
<keyword id="KW-1185">Reference proteome</keyword>
<keyword id="KW-0735">Signal-anchor</keyword>
<keyword id="KW-0812">Transmembrane</keyword>
<keyword id="KW-1133">Transmembrane helix</keyword>
<keyword id="KW-0813">Transport</keyword>
<keyword id="KW-0832">Ubl conjugation</keyword>
<dbReference type="EMBL" id="AF515773">
    <property type="protein sequence ID" value="AAP47190.1"/>
    <property type="status" value="ALT_INIT"/>
    <property type="molecule type" value="mRNA"/>
</dbReference>
<dbReference type="RefSeq" id="NP_001076125.1">
    <property type="nucleotide sequence ID" value="NM_001082656.1"/>
</dbReference>
<dbReference type="SMR" id="Q7YQK3"/>
<dbReference type="FunCoup" id="Q7YQK3">
    <property type="interactions" value="317"/>
</dbReference>
<dbReference type="STRING" id="9986.ENSOCUP00000001148"/>
<dbReference type="CAZy" id="GH13">
    <property type="family name" value="Glycoside Hydrolase Family 13"/>
</dbReference>
<dbReference type="GlyCosmos" id="Q7YQK3">
    <property type="glycosylation" value="1 site, No reported glycans"/>
</dbReference>
<dbReference type="PaxDb" id="9986-ENSOCUP00000001148"/>
<dbReference type="GeneID" id="100009363"/>
<dbReference type="KEGG" id="ocu:100009363"/>
<dbReference type="CTD" id="6520"/>
<dbReference type="eggNOG" id="KOG0471">
    <property type="taxonomic scope" value="Eukaryota"/>
</dbReference>
<dbReference type="InParanoid" id="Q7YQK3"/>
<dbReference type="OrthoDB" id="1740265at2759"/>
<dbReference type="TreeFam" id="TF314498"/>
<dbReference type="SABIO-RK" id="Q7YQK3"/>
<dbReference type="Proteomes" id="UP000001811">
    <property type="component" value="Unplaced"/>
</dbReference>
<dbReference type="GO" id="GO:0070161">
    <property type="term" value="C:anchoring junction"/>
    <property type="evidence" value="ECO:0007669"/>
    <property type="project" value="UniProtKB-SubCell"/>
</dbReference>
<dbReference type="GO" id="GO:0016324">
    <property type="term" value="C:apical plasma membrane"/>
    <property type="evidence" value="ECO:0007669"/>
    <property type="project" value="UniProtKB-SubCell"/>
</dbReference>
<dbReference type="GO" id="GO:0016323">
    <property type="term" value="C:basolateral plasma membrane"/>
    <property type="evidence" value="ECO:0007669"/>
    <property type="project" value="UniProtKB-SubCell"/>
</dbReference>
<dbReference type="GO" id="GO:0005765">
    <property type="term" value="C:lysosomal membrane"/>
    <property type="evidence" value="ECO:0007669"/>
    <property type="project" value="UniProtKB-SubCell"/>
</dbReference>
<dbReference type="GO" id="GO:0042470">
    <property type="term" value="C:melanosome"/>
    <property type="evidence" value="ECO:0007669"/>
    <property type="project" value="UniProtKB-SubCell"/>
</dbReference>
<dbReference type="GO" id="GO:0016020">
    <property type="term" value="C:membrane"/>
    <property type="evidence" value="ECO:0000305"/>
    <property type="project" value="UniProtKB"/>
</dbReference>
<dbReference type="GO" id="GO:0005886">
    <property type="term" value="C:plasma membrane"/>
    <property type="evidence" value="ECO:0000250"/>
    <property type="project" value="UniProtKB"/>
</dbReference>
<dbReference type="GO" id="GO:0015173">
    <property type="term" value="F:aromatic amino acid transmembrane transporter activity"/>
    <property type="evidence" value="ECO:0007669"/>
    <property type="project" value="TreeGrafter"/>
</dbReference>
<dbReference type="GO" id="GO:0015180">
    <property type="term" value="F:L-alanine transmembrane transporter activity"/>
    <property type="evidence" value="ECO:0007669"/>
    <property type="project" value="TreeGrafter"/>
</dbReference>
<dbReference type="GO" id="GO:0015190">
    <property type="term" value="F:L-leucine transmembrane transporter activity"/>
    <property type="evidence" value="ECO:0007669"/>
    <property type="project" value="TreeGrafter"/>
</dbReference>
<dbReference type="GO" id="GO:0046982">
    <property type="term" value="F:protein heterodimerization activity"/>
    <property type="evidence" value="ECO:0000314"/>
    <property type="project" value="UniProtKB"/>
</dbReference>
<dbReference type="GO" id="GO:0005975">
    <property type="term" value="P:carbohydrate metabolic process"/>
    <property type="evidence" value="ECO:0007669"/>
    <property type="project" value="InterPro"/>
</dbReference>
<dbReference type="GO" id="GO:1904273">
    <property type="term" value="P:L-alanine import across plasma membrane"/>
    <property type="evidence" value="ECO:0007669"/>
    <property type="project" value="TreeGrafter"/>
</dbReference>
<dbReference type="GO" id="GO:1903801">
    <property type="term" value="P:L-leucine import across plasma membrane"/>
    <property type="evidence" value="ECO:0000250"/>
    <property type="project" value="UniProtKB"/>
</dbReference>
<dbReference type="GO" id="GO:0015820">
    <property type="term" value="P:L-leucine transport"/>
    <property type="evidence" value="ECO:0000250"/>
    <property type="project" value="UniProtKB"/>
</dbReference>
<dbReference type="GO" id="GO:0015823">
    <property type="term" value="P:phenylalanine transport"/>
    <property type="evidence" value="ECO:0000314"/>
    <property type="project" value="UniProtKB"/>
</dbReference>
<dbReference type="GO" id="GO:0015827">
    <property type="term" value="P:tryptophan transport"/>
    <property type="evidence" value="ECO:0000314"/>
    <property type="project" value="UniProtKB"/>
</dbReference>
<dbReference type="FunFam" id="2.60.40.1180:FF:000012">
    <property type="entry name" value="4F2 cell-surface antigen heavy chain"/>
    <property type="match status" value="1"/>
</dbReference>
<dbReference type="FunFam" id="3.20.20.80:FF:000061">
    <property type="entry name" value="4F2 cell-surface antigen heavy chain"/>
    <property type="match status" value="1"/>
</dbReference>
<dbReference type="Gene3D" id="3.20.20.80">
    <property type="entry name" value="Glycosidases"/>
    <property type="match status" value="1"/>
</dbReference>
<dbReference type="Gene3D" id="2.60.40.1180">
    <property type="entry name" value="Golgi alpha-mannosidase II"/>
    <property type="match status" value="1"/>
</dbReference>
<dbReference type="InterPro" id="IPR006047">
    <property type="entry name" value="Glyco_hydro_13_cat_dom"/>
</dbReference>
<dbReference type="InterPro" id="IPR013780">
    <property type="entry name" value="Glyco_hydro_b"/>
</dbReference>
<dbReference type="InterPro" id="IPR017853">
    <property type="entry name" value="Glycoside_hydrolase_SF"/>
</dbReference>
<dbReference type="InterPro" id="IPR042280">
    <property type="entry name" value="SLC3A2"/>
</dbReference>
<dbReference type="InterPro" id="IPR031984">
    <property type="entry name" value="SLC3A2_N"/>
</dbReference>
<dbReference type="PANTHER" id="PTHR46673">
    <property type="entry name" value="4F2 CELL-SURFACE ANTIGEN HEAVY CHAIN"/>
    <property type="match status" value="1"/>
</dbReference>
<dbReference type="PANTHER" id="PTHR46673:SF1">
    <property type="entry name" value="4F2 CELL-SURFACE ANTIGEN HEAVY CHAIN"/>
    <property type="match status" value="1"/>
</dbReference>
<dbReference type="Pfam" id="PF00128">
    <property type="entry name" value="Alpha-amylase"/>
    <property type="match status" value="1"/>
</dbReference>
<dbReference type="Pfam" id="PF16028">
    <property type="entry name" value="SLC3A2_N"/>
    <property type="match status" value="1"/>
</dbReference>
<dbReference type="SMART" id="SM00642">
    <property type="entry name" value="Aamy"/>
    <property type="match status" value="1"/>
</dbReference>
<dbReference type="SUPFAM" id="SSF51445">
    <property type="entry name" value="(Trans)glycosidases"/>
    <property type="match status" value="1"/>
</dbReference>
<dbReference type="SUPFAM" id="SSF51011">
    <property type="entry name" value="Glycosyl hydrolase domain"/>
    <property type="match status" value="1"/>
</dbReference>
<proteinExistence type="evidence at protein level"/>
<organism>
    <name type="scientific">Oryctolagus cuniculus</name>
    <name type="common">Rabbit</name>
    <dbReference type="NCBI Taxonomy" id="9986"/>
    <lineage>
        <taxon>Eukaryota</taxon>
        <taxon>Metazoa</taxon>
        <taxon>Chordata</taxon>
        <taxon>Craniata</taxon>
        <taxon>Vertebrata</taxon>
        <taxon>Euteleostomi</taxon>
        <taxon>Mammalia</taxon>
        <taxon>Eutheria</taxon>
        <taxon>Euarchontoglires</taxon>
        <taxon>Glires</taxon>
        <taxon>Lagomorpha</taxon>
        <taxon>Leporidae</taxon>
        <taxon>Oryctolagus</taxon>
    </lineage>
</organism>
<name>4F2_RABIT</name>
<protein>
    <recommendedName>
        <fullName evidence="10">Amino acid transporter heavy chain SLC3A2</fullName>
    </recommendedName>
    <alternativeName>
        <fullName evidence="1">4F2 cell-surface antigen heavy chain</fullName>
        <shortName evidence="9">4F2hc</shortName>
    </alternativeName>
    <alternativeName>
        <fullName evidence="1">Solute carrier family 3 member 2</fullName>
    </alternativeName>
    <cdAntigenName>CD98</cdAntigenName>
</protein>